<accession>B2K6U4</accession>
<organism>
    <name type="scientific">Yersinia pseudotuberculosis serotype IB (strain PB1/+)</name>
    <dbReference type="NCBI Taxonomy" id="502801"/>
    <lineage>
        <taxon>Bacteria</taxon>
        <taxon>Pseudomonadati</taxon>
        <taxon>Pseudomonadota</taxon>
        <taxon>Gammaproteobacteria</taxon>
        <taxon>Enterobacterales</taxon>
        <taxon>Yersiniaceae</taxon>
        <taxon>Yersinia</taxon>
    </lineage>
</organism>
<keyword id="KW-0547">Nucleotide-binding</keyword>
<dbReference type="EMBL" id="CP001048">
    <property type="protein sequence ID" value="ACC87968.1"/>
    <property type="molecule type" value="Genomic_DNA"/>
</dbReference>
<dbReference type="RefSeq" id="WP_002208655.1">
    <property type="nucleotide sequence ID" value="NZ_CP009780.1"/>
</dbReference>
<dbReference type="SMR" id="B2K6U4"/>
<dbReference type="KEGG" id="ypb:YPTS_0987"/>
<dbReference type="PATRIC" id="fig|502801.10.peg.328"/>
<dbReference type="GO" id="GO:0005829">
    <property type="term" value="C:cytosol"/>
    <property type="evidence" value="ECO:0007669"/>
    <property type="project" value="TreeGrafter"/>
</dbReference>
<dbReference type="GO" id="GO:0000166">
    <property type="term" value="F:nucleotide binding"/>
    <property type="evidence" value="ECO:0007669"/>
    <property type="project" value="TreeGrafter"/>
</dbReference>
<dbReference type="CDD" id="cd11740">
    <property type="entry name" value="YajQ_like"/>
    <property type="match status" value="1"/>
</dbReference>
<dbReference type="FunFam" id="3.30.70.860:FF:000001">
    <property type="entry name" value="UPF0234 protein YajQ"/>
    <property type="match status" value="1"/>
</dbReference>
<dbReference type="FunFam" id="3.30.70.990:FF:000001">
    <property type="entry name" value="UPF0234 protein YajQ"/>
    <property type="match status" value="1"/>
</dbReference>
<dbReference type="Gene3D" id="3.30.70.860">
    <property type="match status" value="1"/>
</dbReference>
<dbReference type="Gene3D" id="3.30.70.990">
    <property type="entry name" value="YajQ-like, domain 2"/>
    <property type="match status" value="1"/>
</dbReference>
<dbReference type="HAMAP" id="MF_00632">
    <property type="entry name" value="YajQ"/>
    <property type="match status" value="1"/>
</dbReference>
<dbReference type="InterPro" id="IPR007551">
    <property type="entry name" value="DUF520"/>
</dbReference>
<dbReference type="InterPro" id="IPR035571">
    <property type="entry name" value="UPF0234-like_C"/>
</dbReference>
<dbReference type="InterPro" id="IPR035570">
    <property type="entry name" value="UPF0234_N"/>
</dbReference>
<dbReference type="InterPro" id="IPR036183">
    <property type="entry name" value="YajQ-like_sf"/>
</dbReference>
<dbReference type="NCBIfam" id="NF003819">
    <property type="entry name" value="PRK05412.1"/>
    <property type="match status" value="1"/>
</dbReference>
<dbReference type="PANTHER" id="PTHR30476">
    <property type="entry name" value="UPF0234 PROTEIN YAJQ"/>
    <property type="match status" value="1"/>
</dbReference>
<dbReference type="PANTHER" id="PTHR30476:SF0">
    <property type="entry name" value="UPF0234 PROTEIN YAJQ"/>
    <property type="match status" value="1"/>
</dbReference>
<dbReference type="Pfam" id="PF04461">
    <property type="entry name" value="DUF520"/>
    <property type="match status" value="1"/>
</dbReference>
<dbReference type="SUPFAM" id="SSF89963">
    <property type="entry name" value="YajQ-like"/>
    <property type="match status" value="2"/>
</dbReference>
<feature type="chain" id="PRO_1000130659" description="Nucleotide-binding protein YPTS_0987">
    <location>
        <begin position="1"/>
        <end position="163"/>
    </location>
</feature>
<evidence type="ECO:0000255" key="1">
    <source>
        <dbReference type="HAMAP-Rule" id="MF_00632"/>
    </source>
</evidence>
<comment type="function">
    <text evidence="1">Nucleotide-binding protein.</text>
</comment>
<comment type="similarity">
    <text evidence="1">Belongs to the YajQ family.</text>
</comment>
<protein>
    <recommendedName>
        <fullName evidence="1">Nucleotide-binding protein YPTS_0987</fullName>
    </recommendedName>
</protein>
<proteinExistence type="inferred from homology"/>
<reference key="1">
    <citation type="submission" date="2008-04" db="EMBL/GenBank/DDBJ databases">
        <title>Complete sequence of Yersinia pseudotuberculosis PB1/+.</title>
        <authorList>
            <person name="Copeland A."/>
            <person name="Lucas S."/>
            <person name="Lapidus A."/>
            <person name="Glavina del Rio T."/>
            <person name="Dalin E."/>
            <person name="Tice H."/>
            <person name="Bruce D."/>
            <person name="Goodwin L."/>
            <person name="Pitluck S."/>
            <person name="Munk A.C."/>
            <person name="Brettin T."/>
            <person name="Detter J.C."/>
            <person name="Han C."/>
            <person name="Tapia R."/>
            <person name="Schmutz J."/>
            <person name="Larimer F."/>
            <person name="Land M."/>
            <person name="Hauser L."/>
            <person name="Challacombe J.F."/>
            <person name="Green L."/>
            <person name="Lindler L.E."/>
            <person name="Nikolich M.P."/>
            <person name="Richardson P."/>
        </authorList>
    </citation>
    <scope>NUCLEOTIDE SEQUENCE [LARGE SCALE GENOMIC DNA]</scope>
    <source>
        <strain>PB1/+</strain>
    </source>
</reference>
<name>Y987_YERPB</name>
<sequence length="163" mass="18350">MPSFDIVSEIDMQEVRNAVENATRDLANRWDFRNVPASFELNEKNESIKVVSESDFQVEQLLDILRAQLSKRGIEGAALEIPEEMARSGKTYSVDAKLKQGIESVQAKKLVKLIKDSKLKVQAQIQGEQVRVTGKARDDLQAVMALVRAADLGQPFQFNNFRD</sequence>
<gene>
    <name type="ordered locus">YPTS_0987</name>
</gene>